<feature type="chain" id="PRO_0000091440" description="Elongation factor Tu-B">
    <location>
        <begin position="1"/>
        <end position="396"/>
    </location>
</feature>
<feature type="domain" description="tr-type G">
    <location>
        <begin position="10"/>
        <end position="206"/>
    </location>
</feature>
<feature type="region of interest" description="G1" evidence="1">
    <location>
        <begin position="19"/>
        <end position="26"/>
    </location>
</feature>
<feature type="region of interest" description="G2" evidence="1">
    <location>
        <begin position="60"/>
        <end position="64"/>
    </location>
</feature>
<feature type="region of interest" description="G3" evidence="1">
    <location>
        <begin position="81"/>
        <end position="84"/>
    </location>
</feature>
<feature type="region of interest" description="G4" evidence="1">
    <location>
        <begin position="136"/>
        <end position="139"/>
    </location>
</feature>
<feature type="region of interest" description="G5" evidence="1">
    <location>
        <begin position="174"/>
        <end position="176"/>
    </location>
</feature>
<feature type="binding site" evidence="2">
    <location>
        <begin position="19"/>
        <end position="26"/>
    </location>
    <ligand>
        <name>GTP</name>
        <dbReference type="ChEBI" id="CHEBI:37565"/>
    </ligand>
</feature>
<feature type="binding site" evidence="2">
    <location>
        <position position="26"/>
    </location>
    <ligand>
        <name>Mg(2+)</name>
        <dbReference type="ChEBI" id="CHEBI:18420"/>
    </ligand>
</feature>
<feature type="binding site" evidence="2">
    <location>
        <begin position="81"/>
        <end position="85"/>
    </location>
    <ligand>
        <name>GTP</name>
        <dbReference type="ChEBI" id="CHEBI:37565"/>
    </ligand>
</feature>
<feature type="binding site" evidence="2">
    <location>
        <begin position="136"/>
        <end position="139"/>
    </location>
    <ligand>
        <name>GTP</name>
        <dbReference type="ChEBI" id="CHEBI:37565"/>
    </ligand>
</feature>
<sequence length="396" mass="43171">MARAKFLREKLHVNVGTIGHVDHGKTTLTAALTKIGAERFGGEFKAYDAIDAAPEEKARGITISTAHVEYESAVRHYAHVDCPGHADYVKNMITGAAQMDGAILVCSAADGPMPQTREHILLSRQVGVPHIVVFLNKADMVDDAELLELVEMEVRELLSKYDFPGDDTPIIHGSARLALEGDQSDIGVPAILKLVEALDTFIPDPTRDVDRPFLMPVEDVFSISGRGTVVTGRIERGIIKVGDEIEIVGIRDTQKTTVTGVEMFRKLLDQGQAGDNAGLLLRGTKRDDVERGQVLCKPGSIKPHTEFEAEVYVLSKDEGGRHTPFFKGYRPQFYFRTTDITGACQLPEGVEMVMPGDNVKMVVTLINPVAMDEGLRFAIREGGRTVGAGVVAKIVK</sequence>
<evidence type="ECO:0000250" key="1"/>
<evidence type="ECO:0000255" key="2">
    <source>
        <dbReference type="HAMAP-Rule" id="MF_00118"/>
    </source>
</evidence>
<accession>Q8PC51</accession>
<name>EFTU2_XANCP</name>
<gene>
    <name evidence="2" type="primary">tufB</name>
    <name type="ordered locus">XCC0893</name>
</gene>
<comment type="function">
    <text evidence="2">GTP hydrolase that promotes the GTP-dependent binding of aminoacyl-tRNA to the A-site of ribosomes during protein biosynthesis.</text>
</comment>
<comment type="catalytic activity">
    <reaction evidence="2">
        <text>GTP + H2O = GDP + phosphate + H(+)</text>
        <dbReference type="Rhea" id="RHEA:19669"/>
        <dbReference type="ChEBI" id="CHEBI:15377"/>
        <dbReference type="ChEBI" id="CHEBI:15378"/>
        <dbReference type="ChEBI" id="CHEBI:37565"/>
        <dbReference type="ChEBI" id="CHEBI:43474"/>
        <dbReference type="ChEBI" id="CHEBI:58189"/>
        <dbReference type="EC" id="3.6.5.3"/>
    </reaction>
    <physiologicalReaction direction="left-to-right" evidence="2">
        <dbReference type="Rhea" id="RHEA:19670"/>
    </physiologicalReaction>
</comment>
<comment type="subunit">
    <text evidence="2">Monomer.</text>
</comment>
<comment type="subcellular location">
    <subcellularLocation>
        <location evidence="2">Cytoplasm</location>
    </subcellularLocation>
</comment>
<comment type="similarity">
    <text evidence="2">Belongs to the TRAFAC class translation factor GTPase superfamily. Classic translation factor GTPase family. EF-Tu/EF-1A subfamily.</text>
</comment>
<organism>
    <name type="scientific">Xanthomonas campestris pv. campestris (strain ATCC 33913 / DSM 3586 / NCPPB 528 / LMG 568 / P 25)</name>
    <dbReference type="NCBI Taxonomy" id="190485"/>
    <lineage>
        <taxon>Bacteria</taxon>
        <taxon>Pseudomonadati</taxon>
        <taxon>Pseudomonadota</taxon>
        <taxon>Gammaproteobacteria</taxon>
        <taxon>Lysobacterales</taxon>
        <taxon>Lysobacteraceae</taxon>
        <taxon>Xanthomonas</taxon>
    </lineage>
</organism>
<protein>
    <recommendedName>
        <fullName evidence="2">Elongation factor Tu-B</fullName>
        <shortName evidence="2">EF-Tu-B</shortName>
        <ecNumber evidence="2">3.6.5.3</ecNumber>
    </recommendedName>
</protein>
<proteinExistence type="inferred from homology"/>
<dbReference type="EC" id="3.6.5.3" evidence="2"/>
<dbReference type="EMBL" id="AE008922">
    <property type="protein sequence ID" value="AAM40203.1"/>
    <property type="molecule type" value="Genomic_DNA"/>
</dbReference>
<dbReference type="RefSeq" id="NP_636279.1">
    <property type="nucleotide sequence ID" value="NC_003902.1"/>
</dbReference>
<dbReference type="SMR" id="Q8PC51"/>
<dbReference type="STRING" id="190485.XCC0893"/>
<dbReference type="EnsemblBacteria" id="AAM40203">
    <property type="protein sequence ID" value="AAM40203"/>
    <property type="gene ID" value="XCC0893"/>
</dbReference>
<dbReference type="KEGG" id="xcc:XCC0893"/>
<dbReference type="PATRIC" id="fig|190485.4.peg.965"/>
<dbReference type="HOGENOM" id="CLU_007265_0_0_6"/>
<dbReference type="OrthoDB" id="9803139at2"/>
<dbReference type="Proteomes" id="UP000001010">
    <property type="component" value="Chromosome"/>
</dbReference>
<dbReference type="GO" id="GO:0005737">
    <property type="term" value="C:cytoplasm"/>
    <property type="evidence" value="ECO:0007669"/>
    <property type="project" value="UniProtKB-SubCell"/>
</dbReference>
<dbReference type="GO" id="GO:0005525">
    <property type="term" value="F:GTP binding"/>
    <property type="evidence" value="ECO:0007669"/>
    <property type="project" value="UniProtKB-UniRule"/>
</dbReference>
<dbReference type="GO" id="GO:0003924">
    <property type="term" value="F:GTPase activity"/>
    <property type="evidence" value="ECO:0007669"/>
    <property type="project" value="InterPro"/>
</dbReference>
<dbReference type="GO" id="GO:0097216">
    <property type="term" value="F:guanosine tetraphosphate binding"/>
    <property type="evidence" value="ECO:0007669"/>
    <property type="project" value="UniProtKB-ARBA"/>
</dbReference>
<dbReference type="GO" id="GO:0003746">
    <property type="term" value="F:translation elongation factor activity"/>
    <property type="evidence" value="ECO:0000318"/>
    <property type="project" value="GO_Central"/>
</dbReference>
<dbReference type="GO" id="GO:0006414">
    <property type="term" value="P:translational elongation"/>
    <property type="evidence" value="ECO:0000318"/>
    <property type="project" value="GO_Central"/>
</dbReference>
<dbReference type="CDD" id="cd01884">
    <property type="entry name" value="EF_Tu"/>
    <property type="match status" value="1"/>
</dbReference>
<dbReference type="CDD" id="cd03697">
    <property type="entry name" value="EFTU_II"/>
    <property type="match status" value="1"/>
</dbReference>
<dbReference type="CDD" id="cd03707">
    <property type="entry name" value="EFTU_III"/>
    <property type="match status" value="1"/>
</dbReference>
<dbReference type="FunFam" id="2.40.30.10:FF:000001">
    <property type="entry name" value="Elongation factor Tu"/>
    <property type="match status" value="1"/>
</dbReference>
<dbReference type="FunFam" id="3.40.50.300:FF:000003">
    <property type="entry name" value="Elongation factor Tu"/>
    <property type="match status" value="1"/>
</dbReference>
<dbReference type="Gene3D" id="3.40.50.300">
    <property type="entry name" value="P-loop containing nucleotide triphosphate hydrolases"/>
    <property type="match status" value="1"/>
</dbReference>
<dbReference type="Gene3D" id="2.40.30.10">
    <property type="entry name" value="Translation factors"/>
    <property type="match status" value="2"/>
</dbReference>
<dbReference type="HAMAP" id="MF_00118_B">
    <property type="entry name" value="EF_Tu_B"/>
    <property type="match status" value="1"/>
</dbReference>
<dbReference type="InterPro" id="IPR041709">
    <property type="entry name" value="EF-Tu_GTP-bd"/>
</dbReference>
<dbReference type="InterPro" id="IPR050055">
    <property type="entry name" value="EF-Tu_GTPase"/>
</dbReference>
<dbReference type="InterPro" id="IPR004161">
    <property type="entry name" value="EFTu-like_2"/>
</dbReference>
<dbReference type="InterPro" id="IPR033720">
    <property type="entry name" value="EFTU_2"/>
</dbReference>
<dbReference type="InterPro" id="IPR031157">
    <property type="entry name" value="G_TR_CS"/>
</dbReference>
<dbReference type="InterPro" id="IPR027417">
    <property type="entry name" value="P-loop_NTPase"/>
</dbReference>
<dbReference type="InterPro" id="IPR005225">
    <property type="entry name" value="Small_GTP-bd"/>
</dbReference>
<dbReference type="InterPro" id="IPR000795">
    <property type="entry name" value="T_Tr_GTP-bd_dom"/>
</dbReference>
<dbReference type="InterPro" id="IPR009000">
    <property type="entry name" value="Transl_B-barrel_sf"/>
</dbReference>
<dbReference type="InterPro" id="IPR009001">
    <property type="entry name" value="Transl_elong_EF1A/Init_IF2_C"/>
</dbReference>
<dbReference type="InterPro" id="IPR004541">
    <property type="entry name" value="Transl_elong_EFTu/EF1A_bac/org"/>
</dbReference>
<dbReference type="InterPro" id="IPR004160">
    <property type="entry name" value="Transl_elong_EFTu/EF1A_C"/>
</dbReference>
<dbReference type="NCBIfam" id="TIGR00485">
    <property type="entry name" value="EF-Tu"/>
    <property type="match status" value="1"/>
</dbReference>
<dbReference type="NCBIfam" id="NF000766">
    <property type="entry name" value="PRK00049.1"/>
    <property type="match status" value="1"/>
</dbReference>
<dbReference type="NCBIfam" id="NF009372">
    <property type="entry name" value="PRK12735.1"/>
    <property type="match status" value="1"/>
</dbReference>
<dbReference type="NCBIfam" id="NF009373">
    <property type="entry name" value="PRK12736.1"/>
    <property type="match status" value="1"/>
</dbReference>
<dbReference type="NCBIfam" id="TIGR00231">
    <property type="entry name" value="small_GTP"/>
    <property type="match status" value="1"/>
</dbReference>
<dbReference type="PANTHER" id="PTHR43721:SF22">
    <property type="entry name" value="ELONGATION FACTOR TU, MITOCHONDRIAL"/>
    <property type="match status" value="1"/>
</dbReference>
<dbReference type="PANTHER" id="PTHR43721">
    <property type="entry name" value="ELONGATION FACTOR TU-RELATED"/>
    <property type="match status" value="1"/>
</dbReference>
<dbReference type="Pfam" id="PF00009">
    <property type="entry name" value="GTP_EFTU"/>
    <property type="match status" value="1"/>
</dbReference>
<dbReference type="Pfam" id="PF03144">
    <property type="entry name" value="GTP_EFTU_D2"/>
    <property type="match status" value="1"/>
</dbReference>
<dbReference type="Pfam" id="PF03143">
    <property type="entry name" value="GTP_EFTU_D3"/>
    <property type="match status" value="1"/>
</dbReference>
<dbReference type="PRINTS" id="PR00315">
    <property type="entry name" value="ELONGATNFCT"/>
</dbReference>
<dbReference type="SUPFAM" id="SSF50465">
    <property type="entry name" value="EF-Tu/eEF-1alpha/eIF2-gamma C-terminal domain"/>
    <property type="match status" value="1"/>
</dbReference>
<dbReference type="SUPFAM" id="SSF52540">
    <property type="entry name" value="P-loop containing nucleoside triphosphate hydrolases"/>
    <property type="match status" value="1"/>
</dbReference>
<dbReference type="SUPFAM" id="SSF50447">
    <property type="entry name" value="Translation proteins"/>
    <property type="match status" value="1"/>
</dbReference>
<dbReference type="PROSITE" id="PS00301">
    <property type="entry name" value="G_TR_1"/>
    <property type="match status" value="1"/>
</dbReference>
<dbReference type="PROSITE" id="PS51722">
    <property type="entry name" value="G_TR_2"/>
    <property type="match status" value="1"/>
</dbReference>
<keyword id="KW-0963">Cytoplasm</keyword>
<keyword id="KW-0251">Elongation factor</keyword>
<keyword id="KW-0342">GTP-binding</keyword>
<keyword id="KW-0378">Hydrolase</keyword>
<keyword id="KW-0460">Magnesium</keyword>
<keyword id="KW-0479">Metal-binding</keyword>
<keyword id="KW-0547">Nucleotide-binding</keyword>
<keyword id="KW-0648">Protein biosynthesis</keyword>
<keyword id="KW-1185">Reference proteome</keyword>
<reference key="1">
    <citation type="journal article" date="2002" name="Nature">
        <title>Comparison of the genomes of two Xanthomonas pathogens with differing host specificities.</title>
        <authorList>
            <person name="da Silva A.C.R."/>
            <person name="Ferro J.A."/>
            <person name="Reinach F.C."/>
            <person name="Farah C.S."/>
            <person name="Furlan L.R."/>
            <person name="Quaggio R.B."/>
            <person name="Monteiro-Vitorello C.B."/>
            <person name="Van Sluys M.A."/>
            <person name="Almeida N.F. Jr."/>
            <person name="Alves L.M.C."/>
            <person name="do Amaral A.M."/>
            <person name="Bertolini M.C."/>
            <person name="Camargo L.E.A."/>
            <person name="Camarotte G."/>
            <person name="Cannavan F."/>
            <person name="Cardozo J."/>
            <person name="Chambergo F."/>
            <person name="Ciapina L.P."/>
            <person name="Cicarelli R.M.B."/>
            <person name="Coutinho L.L."/>
            <person name="Cursino-Santos J.R."/>
            <person name="El-Dorry H."/>
            <person name="Faria J.B."/>
            <person name="Ferreira A.J.S."/>
            <person name="Ferreira R.C.C."/>
            <person name="Ferro M.I.T."/>
            <person name="Formighieri E.F."/>
            <person name="Franco M.C."/>
            <person name="Greggio C.C."/>
            <person name="Gruber A."/>
            <person name="Katsuyama A.M."/>
            <person name="Kishi L.T."/>
            <person name="Leite R.P."/>
            <person name="Lemos E.G.M."/>
            <person name="Lemos M.V.F."/>
            <person name="Locali E.C."/>
            <person name="Machado M.A."/>
            <person name="Madeira A.M.B.N."/>
            <person name="Martinez-Rossi N.M."/>
            <person name="Martins E.C."/>
            <person name="Meidanis J."/>
            <person name="Menck C.F.M."/>
            <person name="Miyaki C.Y."/>
            <person name="Moon D.H."/>
            <person name="Moreira L.M."/>
            <person name="Novo M.T.M."/>
            <person name="Okura V.K."/>
            <person name="Oliveira M.C."/>
            <person name="Oliveira V.R."/>
            <person name="Pereira H.A."/>
            <person name="Rossi A."/>
            <person name="Sena J.A.D."/>
            <person name="Silva C."/>
            <person name="de Souza R.F."/>
            <person name="Spinola L.A.F."/>
            <person name="Takita M.A."/>
            <person name="Tamura R.E."/>
            <person name="Teixeira E.C."/>
            <person name="Tezza R.I.D."/>
            <person name="Trindade dos Santos M."/>
            <person name="Truffi D."/>
            <person name="Tsai S.M."/>
            <person name="White F.F."/>
            <person name="Setubal J.C."/>
            <person name="Kitajima J.P."/>
        </authorList>
    </citation>
    <scope>NUCLEOTIDE SEQUENCE [LARGE SCALE GENOMIC DNA]</scope>
    <source>
        <strain>ATCC 33913 / DSM 3586 / NCPPB 528 / LMG 568 / P 25</strain>
    </source>
</reference>